<evidence type="ECO:0000250" key="1">
    <source>
        <dbReference type="UniProtKB" id="P68448"/>
    </source>
</evidence>
<evidence type="ECO:0000305" key="2"/>
<reference key="1">
    <citation type="journal article" date="1993" name="Nature">
        <title>Potential virulence determinants in terminal regions of variola smallpox virus genome.</title>
        <authorList>
            <person name="Massung R.F."/>
            <person name="Esposito J.J."/>
            <person name="Liu L.I."/>
            <person name="Qi J."/>
            <person name="Utterback T.R."/>
            <person name="Knight J.C."/>
            <person name="Aubin L."/>
            <person name="Yuran T.E."/>
            <person name="Parsons J.M."/>
            <person name="Loparev V.N."/>
            <person name="Selivanov N.A."/>
            <person name="Cavallaro K.F."/>
            <person name="Kerlavage A.R."/>
            <person name="Mahy B.W.J."/>
            <person name="Venter J.C."/>
        </authorList>
    </citation>
    <scope>NUCLEOTIDE SEQUENCE [GENOMIC DNA]</scope>
    <source>
        <strain>Bangladesh-1975</strain>
    </source>
</reference>
<gene>
    <name type="primary">OPG073</name>
    <name type="ORF">E11L</name>
</gene>
<organismHost>
    <name type="scientific">Homo sapiens</name>
    <name type="common">Human</name>
    <dbReference type="NCBI Taxonomy" id="9606"/>
</organismHost>
<accession>P0DSU0</accession>
<accession>P33822</accession>
<protein>
    <recommendedName>
        <fullName>Core protein OPG073</fullName>
    </recommendedName>
    <alternativeName>
        <fullName>Protein E11</fullName>
    </alternativeName>
</protein>
<name>PG073_VARV</name>
<comment type="subcellular location">
    <subcellularLocation>
        <location evidence="1">Virion</location>
    </subcellularLocation>
    <text evidence="1">Found in the core of mature virions.</text>
</comment>
<comment type="induction">
    <text evidence="1">Expressed in the intermediate phase of the viral replicative cycle.</text>
</comment>
<comment type="similarity">
    <text evidence="2">Belongs to the orthopoxvirus OPG073 family.</text>
</comment>
<proteinExistence type="inferred from homology"/>
<sequence>MELVNIFLETDAGRVKFVIKNTDDVCASELINKFVELLSEYIHIDQSEFYLVVKDKDIFYFKCDKGSISIVSNEFYVFDEPLLFVKDYTNVTGVEFIVTETMPCRIIPKNNHAVISVVTNHKFYNGLSL</sequence>
<dbReference type="EMBL" id="L22579">
    <property type="protein sequence ID" value="AAA60800.1"/>
    <property type="molecule type" value="Genomic_DNA"/>
</dbReference>
<dbReference type="PIR" id="T28490">
    <property type="entry name" value="T28490"/>
</dbReference>
<dbReference type="RefSeq" id="NP_042096.1">
    <property type="nucleotide sequence ID" value="NC_001611.1"/>
</dbReference>
<dbReference type="SMR" id="P0DSU0"/>
<dbReference type="GeneID" id="1486406"/>
<dbReference type="KEGG" id="vg:1486406"/>
<dbReference type="Proteomes" id="UP000119805">
    <property type="component" value="Segment"/>
</dbReference>
<dbReference type="GO" id="GO:0044423">
    <property type="term" value="C:virion component"/>
    <property type="evidence" value="ECO:0007669"/>
    <property type="project" value="UniProtKB-KW"/>
</dbReference>
<dbReference type="InterPro" id="IPR009201">
    <property type="entry name" value="Virion_core"/>
</dbReference>
<dbReference type="Pfam" id="PF06138">
    <property type="entry name" value="Chordopox_E11"/>
    <property type="match status" value="1"/>
</dbReference>
<dbReference type="PIRSF" id="PIRSF015797">
    <property type="entry name" value="Virion_core"/>
    <property type="match status" value="1"/>
</dbReference>
<feature type="chain" id="PRO_0000448181" description="Core protein OPG073">
    <location>
        <begin position="1"/>
        <end position="129"/>
    </location>
</feature>
<organism>
    <name type="scientific">Variola virus</name>
    <dbReference type="NCBI Taxonomy" id="10255"/>
    <lineage>
        <taxon>Viruses</taxon>
        <taxon>Varidnaviria</taxon>
        <taxon>Bamfordvirae</taxon>
        <taxon>Nucleocytoviricota</taxon>
        <taxon>Pokkesviricetes</taxon>
        <taxon>Chitovirales</taxon>
        <taxon>Poxviridae</taxon>
        <taxon>Chordopoxvirinae</taxon>
        <taxon>Orthopoxvirus</taxon>
    </lineage>
</organism>
<keyword id="KW-0946">Virion</keyword>